<proteinExistence type="evidence at protein level"/>
<comment type="function">
    <text evidence="5 7">Major structural component of sperm fibrous sheath (PubMed:12167408). Plays a role in sperm motility (PubMed:12167408, PubMed:31255637).</text>
</comment>
<comment type="subunit">
    <text evidence="2 6 13">Interacts with PRKAR1A and PRKAR2A (PubMed:9852104). Interacts with ENO4 (PubMed:23446454). Interacts with QRICH2 (By similarity).</text>
</comment>
<comment type="subcellular location">
    <subcellularLocation>
        <location evidence="2">Cell projection</location>
        <location evidence="2">Cilium</location>
        <location evidence="2">Flagellum</location>
    </subcellularLocation>
    <text evidence="2">Localizes to the principle piece of the sperm flagellum.</text>
</comment>
<comment type="alternative products">
    <event type="alternative splicing"/>
    <isoform>
        <id>Q60662-1</id>
        <name>1</name>
        <sequence type="displayed"/>
    </isoform>
    <isoform>
        <id>Q60662-2</id>
        <name>2</name>
        <sequence type="described" ref="VSP_004100"/>
    </isoform>
</comment>
<comment type="tissue specificity">
    <text evidence="5 8 11 12">Expressed in the fibrous sheath of spermatozoa (at protein level) (PubMed:12167408, PubMed:35618043, PubMed:7711182, PubMed:8088444). Expressed in step 1 to step 6 spermatids, abundance then increases during steps 8 to 12, abundance decreases thereafter (PubMed:7711182).</text>
</comment>
<comment type="domain">
    <text evidence="13">RI-alpha binding site, predicted to form an amphipathic helix, could participate in protein-protein interactions with a complementary surface on the R-subunit dimer.</text>
</comment>
<comment type="PTM">
    <text evidence="9">Phosphorylated by STK33 during sperm flagella assembly.</text>
</comment>
<comment type="disruption phenotype">
    <text evidence="5 7">Male mice are sterile due to abnormal sperm morphology and motility (PubMed:12167408, PubMed:31255637). Sperm numbers are not reduced (PubMed:12167408).</text>
</comment>
<comment type="similarity">
    <text evidence="17">Belongs to the AKAP110 family.</text>
</comment>
<dbReference type="EMBL" id="U10341">
    <property type="protein sequence ID" value="AAA75597.1"/>
    <property type="molecule type" value="mRNA"/>
</dbReference>
<dbReference type="EMBL" id="U07423">
    <property type="protein sequence ID" value="AAA53216.1"/>
    <property type="molecule type" value="mRNA"/>
</dbReference>
<dbReference type="EMBL" id="AF448786">
    <property type="protein sequence ID" value="AAM18539.1"/>
    <property type="molecule type" value="Genomic_DNA"/>
</dbReference>
<dbReference type="EMBL" id="AF448784">
    <property type="protein sequence ID" value="AAM18539.1"/>
    <property type="status" value="JOINED"/>
    <property type="molecule type" value="Genomic_DNA"/>
</dbReference>
<dbReference type="EMBL" id="AF448785">
    <property type="protein sequence ID" value="AAM18539.1"/>
    <property type="status" value="JOINED"/>
    <property type="molecule type" value="Genomic_DNA"/>
</dbReference>
<dbReference type="EMBL" id="AF448786">
    <property type="protein sequence ID" value="AAM18540.1"/>
    <property type="molecule type" value="Genomic_DNA"/>
</dbReference>
<dbReference type="EMBL" id="AF448785">
    <property type="protein sequence ID" value="AAM18540.1"/>
    <property type="status" value="JOINED"/>
    <property type="molecule type" value="Genomic_DNA"/>
</dbReference>
<dbReference type="EMBL" id="AL808124">
    <property type="status" value="NOT_ANNOTATED_CDS"/>
    <property type="molecule type" value="Genomic_DNA"/>
</dbReference>
<dbReference type="CCDS" id="CCDS40838.1">
    <molecule id="Q60662-1"/>
</dbReference>
<dbReference type="CCDS" id="CCDS40839.1">
    <molecule id="Q60662-2"/>
</dbReference>
<dbReference type="PIR" id="I49060">
    <property type="entry name" value="I49060"/>
</dbReference>
<dbReference type="RefSeq" id="NP_001036007.1">
    <molecule id="Q60662-2"/>
    <property type="nucleotide sequence ID" value="NM_001042542.2"/>
</dbReference>
<dbReference type="RefSeq" id="NP_033781.2">
    <molecule id="Q60662-1"/>
    <property type="nucleotide sequence ID" value="NM_009651.4"/>
</dbReference>
<dbReference type="BioGRID" id="198051">
    <property type="interactions" value="1"/>
</dbReference>
<dbReference type="FunCoup" id="Q60662">
    <property type="interactions" value="24"/>
</dbReference>
<dbReference type="STRING" id="10090.ENSMUSP00000050962"/>
<dbReference type="iPTMnet" id="Q60662"/>
<dbReference type="PhosphoSitePlus" id="Q60662"/>
<dbReference type="PaxDb" id="10090-ENSMUSP00000050962"/>
<dbReference type="ProteomicsDB" id="296389">
    <molecule id="Q60662-1"/>
</dbReference>
<dbReference type="ProteomicsDB" id="296390">
    <molecule id="Q60662-2"/>
</dbReference>
<dbReference type="Antibodypedia" id="470">
    <property type="antibodies" value="152 antibodies from 29 providers"/>
</dbReference>
<dbReference type="DNASU" id="11643"/>
<dbReference type="Ensembl" id="ENSMUST00000057101.13">
    <molecule id="Q60662-1"/>
    <property type="protein sequence ID" value="ENSMUSP00000050962.7"/>
    <property type="gene ID" value="ENSMUSG00000050089.14"/>
</dbReference>
<dbReference type="Ensembl" id="ENSMUST00000115750.8">
    <molecule id="Q60662-2"/>
    <property type="protein sequence ID" value="ENSMUSP00000111416.2"/>
    <property type="gene ID" value="ENSMUSG00000050089.14"/>
</dbReference>
<dbReference type="Ensembl" id="ENSMUST00000115751.3">
    <molecule id="Q60662-2"/>
    <property type="protein sequence ID" value="ENSMUSP00000111417.2"/>
    <property type="gene ID" value="ENSMUSG00000050089.14"/>
</dbReference>
<dbReference type="GeneID" id="11643"/>
<dbReference type="KEGG" id="mmu:11643"/>
<dbReference type="UCSC" id="uc009slc.2">
    <molecule id="Q60662-1"/>
    <property type="organism name" value="mouse"/>
</dbReference>
<dbReference type="AGR" id="MGI:102794"/>
<dbReference type="CTD" id="8852"/>
<dbReference type="MGI" id="MGI:102794">
    <property type="gene designation" value="Akap4"/>
</dbReference>
<dbReference type="VEuPathDB" id="HostDB:ENSMUSG00000050089"/>
<dbReference type="eggNOG" id="ENOG502QQXJ">
    <property type="taxonomic scope" value="Eukaryota"/>
</dbReference>
<dbReference type="GeneTree" id="ENSGT00940000153313"/>
<dbReference type="HOGENOM" id="CLU_016756_1_0_1"/>
<dbReference type="InParanoid" id="Q60662"/>
<dbReference type="OMA" id="KLCMLMA"/>
<dbReference type="OrthoDB" id="6154436at2759"/>
<dbReference type="PhylomeDB" id="Q60662"/>
<dbReference type="TreeFam" id="TF105403"/>
<dbReference type="BioGRID-ORCS" id="11643">
    <property type="hits" value="0 hits in 79 CRISPR screens"/>
</dbReference>
<dbReference type="CD-CODE" id="DE1E139C">
    <property type="entry name" value="Chromatoid body"/>
</dbReference>
<dbReference type="ChiTaRS" id="Akap4">
    <property type="organism name" value="mouse"/>
</dbReference>
<dbReference type="PRO" id="PR:Q60662"/>
<dbReference type="Proteomes" id="UP000000589">
    <property type="component" value="Chromosome X"/>
</dbReference>
<dbReference type="RNAct" id="Q60662">
    <property type="molecule type" value="protein"/>
</dbReference>
<dbReference type="Bgee" id="ENSMUSG00000050089">
    <property type="expression patterns" value="Expressed in seminiferous tubule of testis and 27 other cell types or tissues"/>
</dbReference>
<dbReference type="ExpressionAtlas" id="Q60662">
    <property type="expression patterns" value="baseline and differential"/>
</dbReference>
<dbReference type="GO" id="GO:0005929">
    <property type="term" value="C:cilium"/>
    <property type="evidence" value="ECO:0000314"/>
    <property type="project" value="MGI"/>
</dbReference>
<dbReference type="GO" id="GO:0031514">
    <property type="term" value="C:motile cilium"/>
    <property type="evidence" value="ECO:0000314"/>
    <property type="project" value="UniProtKB"/>
</dbReference>
<dbReference type="GO" id="GO:0048471">
    <property type="term" value="C:perinuclear region of cytoplasm"/>
    <property type="evidence" value="ECO:0000314"/>
    <property type="project" value="UniProtKB"/>
</dbReference>
<dbReference type="GO" id="GO:0097229">
    <property type="term" value="C:sperm end piece"/>
    <property type="evidence" value="ECO:0007669"/>
    <property type="project" value="Ensembl"/>
</dbReference>
<dbReference type="GO" id="GO:0035686">
    <property type="term" value="C:sperm fibrous sheath"/>
    <property type="evidence" value="ECO:0000314"/>
    <property type="project" value="MGI"/>
</dbReference>
<dbReference type="GO" id="GO:0120212">
    <property type="term" value="C:sperm head-tail coupling apparatus"/>
    <property type="evidence" value="ECO:0007669"/>
    <property type="project" value="Ensembl"/>
</dbReference>
<dbReference type="GO" id="GO:0097225">
    <property type="term" value="C:sperm midpiece"/>
    <property type="evidence" value="ECO:0007669"/>
    <property type="project" value="Ensembl"/>
</dbReference>
<dbReference type="GO" id="GO:0097228">
    <property type="term" value="C:sperm principal piece"/>
    <property type="evidence" value="ECO:0000314"/>
    <property type="project" value="MGI"/>
</dbReference>
<dbReference type="GO" id="GO:0030018">
    <property type="term" value="C:Z disc"/>
    <property type="evidence" value="ECO:0000314"/>
    <property type="project" value="UniProtKB"/>
</dbReference>
<dbReference type="GO" id="GO:0051018">
    <property type="term" value="F:protein kinase A binding"/>
    <property type="evidence" value="ECO:0000353"/>
    <property type="project" value="UniProtKB"/>
</dbReference>
<dbReference type="GO" id="GO:0007178">
    <property type="term" value="P:cell surface receptor protein serine/threonine kinase signaling pathway"/>
    <property type="evidence" value="ECO:0000353"/>
    <property type="project" value="MGI"/>
</dbReference>
<dbReference type="GO" id="GO:0051649">
    <property type="term" value="P:establishment of localization in cell"/>
    <property type="evidence" value="ECO:0000315"/>
    <property type="project" value="MGI"/>
</dbReference>
<dbReference type="GO" id="GO:0045184">
    <property type="term" value="P:establishment of protein localization"/>
    <property type="evidence" value="ECO:0000315"/>
    <property type="project" value="MGI"/>
</dbReference>
<dbReference type="GO" id="GO:0030317">
    <property type="term" value="P:flagellated sperm motility"/>
    <property type="evidence" value="ECO:0000315"/>
    <property type="project" value="UniProtKB"/>
</dbReference>
<dbReference type="GO" id="GO:0008104">
    <property type="term" value="P:protein localization"/>
    <property type="evidence" value="ECO:0000315"/>
    <property type="project" value="MGI"/>
</dbReference>
<dbReference type="GO" id="GO:0120316">
    <property type="term" value="P:sperm flagellum assembly"/>
    <property type="evidence" value="ECO:0000315"/>
    <property type="project" value="MGI"/>
</dbReference>
<dbReference type="GO" id="GO:0007283">
    <property type="term" value="P:spermatogenesis"/>
    <property type="evidence" value="ECO:0000315"/>
    <property type="project" value="UniProtKB"/>
</dbReference>
<dbReference type="InterPro" id="IPR020799">
    <property type="entry name" value="AKAP_110"/>
</dbReference>
<dbReference type="InterPro" id="IPR018292">
    <property type="entry name" value="AKAP_110_C"/>
</dbReference>
<dbReference type="InterPro" id="IPR018459">
    <property type="entry name" value="RII-bd_1"/>
</dbReference>
<dbReference type="InterPro" id="IPR008382">
    <property type="entry name" value="SPHK1-interactor_AKAP_110"/>
</dbReference>
<dbReference type="PANTHER" id="PTHR10226">
    <property type="entry name" value="A KINASE ANCHOR PROTEIN"/>
    <property type="match status" value="1"/>
</dbReference>
<dbReference type="PANTHER" id="PTHR10226:SF8">
    <property type="entry name" value="A-KINASE ANCHOR PROTEIN 4"/>
    <property type="match status" value="1"/>
</dbReference>
<dbReference type="Pfam" id="PF05716">
    <property type="entry name" value="AKAP_110"/>
    <property type="match status" value="3"/>
</dbReference>
<dbReference type="Pfam" id="PF10522">
    <property type="entry name" value="RII_binding_1"/>
    <property type="match status" value="1"/>
</dbReference>
<dbReference type="SMART" id="SM00807">
    <property type="entry name" value="AKAP_110"/>
    <property type="match status" value="1"/>
</dbReference>
<name>AKAP4_MOUSE</name>
<protein>
    <recommendedName>
        <fullName evidence="14">A-kinase anchor protein 4</fullName>
        <shortName evidence="14">AKAP-4</shortName>
    </recommendedName>
    <alternativeName>
        <fullName evidence="16">A-kinase anchor protein 82 kDa</fullName>
        <shortName evidence="16">AKAP 82</shortName>
        <shortName evidence="16">mAKAP82</shortName>
        <shortName evidence="16">p82</shortName>
    </alternativeName>
    <alternativeName>
        <fullName>Major sperm fibrous sheath protein</fullName>
    </alternativeName>
    <alternativeName>
        <fullName>Protein kinase A-anchoring protein 4</fullName>
        <shortName>PRKA4</shortName>
    </alternativeName>
</protein>
<accession>Q60662</accession>
<accession>B1AXM7</accession>
<accession>Q60630</accession>
<accession>Q8R2G7</accession>
<feature type="propeptide" id="PRO_0000020659" evidence="3">
    <location>
        <begin position="1"/>
        <end position="188"/>
    </location>
</feature>
<feature type="chain" id="PRO_0000020660" description="A-kinase anchor protein 4">
    <location>
        <begin position="189"/>
        <end position="849"/>
    </location>
</feature>
<feature type="region of interest" description="Disordered" evidence="4">
    <location>
        <begin position="183"/>
        <end position="210"/>
    </location>
</feature>
<feature type="region of interest" description="PKA-RI and PKA-RII subunit binding domain">
    <location>
        <begin position="219"/>
        <end position="232"/>
    </location>
</feature>
<feature type="region of interest" description="PKA-RI-alpha subunit binding domain">
    <location>
        <begin position="335"/>
        <end position="344"/>
    </location>
</feature>
<feature type="compositionally biased region" description="Polar residues" evidence="4">
    <location>
        <begin position="183"/>
        <end position="205"/>
    </location>
</feature>
<feature type="modified residue" description="Phosphoserine" evidence="1">
    <location>
        <position position="96"/>
    </location>
</feature>
<feature type="modified residue" description="Phosphoserine" evidence="1">
    <location>
        <position position="130"/>
    </location>
</feature>
<feature type="modified residue" description="Phosphoserine" evidence="1">
    <location>
        <position position="190"/>
    </location>
</feature>
<feature type="modified residue" description="Phosphoserine" evidence="1">
    <location>
        <position position="204"/>
    </location>
</feature>
<feature type="modified residue" description="Phosphothreonine" evidence="1">
    <location>
        <position position="207"/>
    </location>
</feature>
<feature type="modified residue" description="Phosphoserine" evidence="1">
    <location>
        <position position="213"/>
    </location>
</feature>
<feature type="modified residue" description="Phosphoserine" evidence="1">
    <location>
        <position position="226"/>
    </location>
</feature>
<feature type="modified residue" description="Phosphoserine" evidence="1">
    <location>
        <position position="271"/>
    </location>
</feature>
<feature type="modified residue" description="Phosphotyrosine" evidence="2">
    <location>
        <position position="301"/>
    </location>
</feature>
<feature type="modified residue" description="Phosphoserine" evidence="2">
    <location>
        <position position="302"/>
    </location>
</feature>
<feature type="modified residue" description="Phosphoserine" evidence="1">
    <location>
        <position position="341"/>
    </location>
</feature>
<feature type="modified residue" description="Phosphoserine" evidence="1">
    <location>
        <position position="431"/>
    </location>
</feature>
<feature type="modified residue" description="Phosphoserine" evidence="1">
    <location>
        <position position="442"/>
    </location>
</feature>
<feature type="modified residue" description="Phosphoserine" evidence="1">
    <location>
        <position position="444"/>
    </location>
</feature>
<feature type="modified residue" description="Phosphoserine" evidence="1">
    <location>
        <position position="463"/>
    </location>
</feature>
<feature type="modified residue" description="Phosphoserine" evidence="1">
    <location>
        <position position="492"/>
    </location>
</feature>
<feature type="modified residue" description="Phosphoserine" evidence="1">
    <location>
        <position position="497"/>
    </location>
</feature>
<feature type="modified residue" description="Phosphoserine" evidence="1">
    <location>
        <position position="504"/>
    </location>
</feature>
<feature type="modified residue" description="Phosphothreonine" evidence="1">
    <location>
        <position position="506"/>
    </location>
</feature>
<feature type="modified residue" description="Phosphoserine" evidence="1">
    <location>
        <position position="538"/>
    </location>
</feature>
<feature type="modified residue" description="Phosphoserine; by STK33" evidence="9">
    <location>
        <position position="583"/>
    </location>
</feature>
<feature type="modified residue" description="Phosphoserine" evidence="1">
    <location>
        <position position="628"/>
    </location>
</feature>
<feature type="modified residue" description="Phosphoserine" evidence="1">
    <location>
        <position position="633"/>
    </location>
</feature>
<feature type="modified residue" description="Phosphoserine" evidence="1">
    <location>
        <position position="652"/>
    </location>
</feature>
<feature type="modified residue" description="Phosphoserine" evidence="1">
    <location>
        <position position="702"/>
    </location>
</feature>
<feature type="splice variant" id="VSP_004100" description="In isoform 2." evidence="17">
    <location>
        <begin position="1"/>
        <end position="9"/>
    </location>
</feature>
<feature type="mutagenesis site" description="Knockin mice display male subfertility due to decreased sperm motility." evidence="10">
    <original>R</original>
    <variation>H</variation>
    <location>
        <position position="428"/>
    </location>
</feature>
<feature type="sequence conflict" description="In Ref. 2; AA sequence." evidence="17" ref="2">
    <original>S</original>
    <variation>E</variation>
    <location>
        <position position="341"/>
    </location>
</feature>
<feature type="sequence conflict" description="In Ref. 2; AA sequence." evidence="17" ref="2">
    <original>S</original>
    <variation>D</variation>
    <location>
        <position position="444"/>
    </location>
</feature>
<feature type="sequence conflict" description="In Ref. 2; AA sequence." evidence="17" ref="2">
    <original>L</original>
    <variation>T</variation>
    <location>
        <position position="445"/>
    </location>
</feature>
<feature type="sequence conflict" description="In Ref. 1; AAA53216." evidence="17" ref="1">
    <original>T</original>
    <variation>P</variation>
    <location>
        <position position="449"/>
    </location>
</feature>
<feature type="sequence conflict" description="In Ref. 1; AAA53216." evidence="17" ref="1">
    <original>K</original>
    <variation>T</variation>
    <location>
        <position position="480"/>
    </location>
</feature>
<feature type="sequence conflict" description="In Ref. 1; AAA53216." evidence="17" ref="1">
    <original>N</original>
    <variation>T</variation>
    <location>
        <position position="510"/>
    </location>
</feature>
<feature type="sequence conflict" description="In Ref. 2; AA sequence." evidence="17" ref="2">
    <original>I</original>
    <variation>T</variation>
    <location>
        <position position="547"/>
    </location>
</feature>
<feature type="sequence conflict" description="In Ref. 2; AA sequence." evidence="17" ref="2">
    <original>S</original>
    <variation>P</variation>
    <location>
        <position position="549"/>
    </location>
</feature>
<feature type="sequence conflict" description="In Ref. 1; AAA53216." evidence="17" ref="1">
    <original>G</original>
    <variation>A</variation>
    <location>
        <position position="564"/>
    </location>
</feature>
<feature type="sequence conflict" description="In Ref. 1; AAA53216." evidence="17" ref="1">
    <original>S</original>
    <variation>R</variation>
    <location>
        <position position="714"/>
    </location>
</feature>
<feature type="sequence conflict" description="In Ref. 1; AAA53216." evidence="17" ref="1">
    <original>A</original>
    <variation>G</variation>
    <location>
        <position position="721"/>
    </location>
</feature>
<reference key="1">
    <citation type="journal article" date="1994" name="Dev. Biol.">
        <title>The major fibrous sheath polypeptide of mouse sperm: structural and functional similarities to the A-kinase anchoring proteins.</title>
        <authorList>
            <person name="Carrera A."/>
            <person name="Gerton G.L."/>
            <person name="Moss S.B."/>
        </authorList>
    </citation>
    <scope>NUCLEOTIDE SEQUENCE [MRNA] (ISOFORM 1)</scope>
    <scope>PARTIAL PROTEIN SEQUENCE</scope>
    <scope>TISSUE SPECIFICITY</scope>
    <source>
        <strain>CD-1</strain>
        <tissue>Sperm</tissue>
    </source>
</reference>
<reference key="2">
    <citation type="journal article" date="1995" name="Biol. Reprod.">
        <title>Characterization of Fsc1 cDNA for a mouse sperm fibrous sheath component.</title>
        <authorList>
            <person name="Fulcher K.D."/>
            <person name="Mori C."/>
            <person name="Welch J.E."/>
            <person name="O'Brien D.A."/>
            <person name="Klapper D.G."/>
            <person name="Eddy E.M."/>
        </authorList>
    </citation>
    <scope>NUCLEOTIDE SEQUENCE [MRNA] (ISOFORM 1)</scope>
    <scope>PARTIAL PROTEIN SEQUENCE</scope>
    <scope>TISSUE SPECIFICITY</scope>
    <source>
        <strain>CD-1</strain>
        <tissue>Spermatid</tissue>
    </source>
</reference>
<reference key="3">
    <citation type="journal article" date="2003" name="Biol. Reprod.">
        <title>A-kinase anchoring protein 4 binding proteins in the fibrous sheath of the sperm flagellum.</title>
        <authorList>
            <person name="Brown P.R."/>
            <person name="Miki K."/>
            <person name="Harper D.B."/>
            <person name="Eddy E.M."/>
        </authorList>
    </citation>
    <scope>NUCLEOTIDE SEQUENCE [GENOMIC DNA] (ISOFORMS 1 AND 2)</scope>
    <source>
        <strain>129/Sv</strain>
    </source>
</reference>
<reference key="4">
    <citation type="journal article" date="2009" name="PLoS Biol.">
        <title>Lineage-specific biology revealed by a finished genome assembly of the mouse.</title>
        <authorList>
            <person name="Church D.M."/>
            <person name="Goodstadt L."/>
            <person name="Hillier L.W."/>
            <person name="Zody M.C."/>
            <person name="Goldstein S."/>
            <person name="She X."/>
            <person name="Bult C.J."/>
            <person name="Agarwala R."/>
            <person name="Cherry J.L."/>
            <person name="DiCuccio M."/>
            <person name="Hlavina W."/>
            <person name="Kapustin Y."/>
            <person name="Meric P."/>
            <person name="Maglott D."/>
            <person name="Birtle Z."/>
            <person name="Marques A.C."/>
            <person name="Graves T."/>
            <person name="Zhou S."/>
            <person name="Teague B."/>
            <person name="Potamousis K."/>
            <person name="Churas C."/>
            <person name="Place M."/>
            <person name="Herschleb J."/>
            <person name="Runnheim R."/>
            <person name="Forrest D."/>
            <person name="Amos-Landgraf J."/>
            <person name="Schwartz D.C."/>
            <person name="Cheng Z."/>
            <person name="Lindblad-Toh K."/>
            <person name="Eichler E.E."/>
            <person name="Ponting C.P."/>
        </authorList>
    </citation>
    <scope>NUCLEOTIDE SEQUENCE [LARGE SCALE GENOMIC DNA]</scope>
    <source>
        <strain>C57BL/6J</strain>
    </source>
</reference>
<reference key="5">
    <citation type="journal article" date="1998" name="J. Biol. Chem.">
        <title>Identification of tethering domains for protein kinase A type Ialpha regulatory subunits on sperm fibrous sheath protein FSC1.</title>
        <authorList>
            <person name="Miki K."/>
            <person name="Eddy E.M."/>
        </authorList>
    </citation>
    <scope>INTERACTION WITH PRKAR1A AND PRKAR2A</scope>
    <scope>DOMAIN</scope>
</reference>
<reference key="6">
    <citation type="journal article" date="2002" name="Dev. Biol.">
        <title>Targeted disruption of the Akap4 gene causes defects in sperm flagellum and motility.</title>
        <authorList>
            <person name="Miki K."/>
            <person name="Willis W.D."/>
            <person name="Brown P.R."/>
            <person name="Goulding E.H."/>
            <person name="Fulcher K.D."/>
            <person name="Eddy E.M."/>
        </authorList>
    </citation>
    <scope>FUNCTION</scope>
    <scope>DISRUPTION PHENOTYPE</scope>
    <scope>TISSUE SPECIFICITY</scope>
</reference>
<reference key="7">
    <citation type="journal article" date="2010" name="Cell">
        <title>A tissue-specific atlas of mouse protein phosphorylation and expression.</title>
        <authorList>
            <person name="Huttlin E.L."/>
            <person name="Jedrychowski M.P."/>
            <person name="Elias J.E."/>
            <person name="Goswami T."/>
            <person name="Rad R."/>
            <person name="Beausoleil S.A."/>
            <person name="Villen J."/>
            <person name="Haas W."/>
            <person name="Sowa M.E."/>
            <person name="Gygi S.P."/>
        </authorList>
    </citation>
    <scope>IDENTIFICATION BY MASS SPECTROMETRY [LARGE SCALE ANALYSIS]</scope>
    <source>
        <tissue>Testis</tissue>
    </source>
</reference>
<reference key="8">
    <citation type="journal article" date="2013" name="Biol. Reprod.">
        <title>Disruption of a spermatogenic cell-specific mouse enolase 4 (eno4) gene causes sperm structural defects and male infertility.</title>
        <authorList>
            <person name="Nakamura N."/>
            <person name="Dai Q."/>
            <person name="Williams J."/>
            <person name="Goulding E.H."/>
            <person name="Willis W.D."/>
            <person name="Brown P.R."/>
            <person name="Eddy E.M."/>
        </authorList>
    </citation>
    <scope>INTERACTION WITH ENO4</scope>
</reference>
<reference key="9">
    <citation type="journal article" date="2019" name="Dev. Biol.">
        <title>Proteomics and single-cell RNA analysis of Akap4-knockout mice model confirm indispensable role of Akap4 in spermatogenesis.</title>
        <authorList>
            <person name="Fang X."/>
            <person name="Huang L.L."/>
            <person name="Xu J."/>
            <person name="Ma C.Q."/>
            <person name="Chen Z.H."/>
            <person name="Zhang Z."/>
            <person name="Liao C.H."/>
            <person name="Zheng S.X."/>
            <person name="Huang P."/>
            <person name="Xu W.M."/>
            <person name="Li N."/>
            <person name="Sun L."/>
        </authorList>
    </citation>
    <scope>FUNCTION</scope>
    <scope>DISRUPTION PHENOTYPE</scope>
</reference>
<reference key="10">
    <citation type="journal article" date="2022" name="Dev. Biol.">
        <title>IRGC1, a testis-enriched immunity related GTPase, is important for fibrous sheath integrity and sperm motility in mice.</title>
        <authorList>
            <person name="Kaneda Y."/>
            <person name="Miyata H."/>
            <person name="Shimada K."/>
            <person name="Oyama Y."/>
            <person name="Iida-Norita R."/>
            <person name="Ikawa M."/>
        </authorList>
    </citation>
    <scope>TISSUE SPECIFICITY</scope>
</reference>
<reference key="11">
    <citation type="journal article" date="2023" name="Clin. Transl. Med.">
        <title>A pathogenic AKAP4 variant, p.R429H, causes male in/subfertility in humans and mice.</title>
        <authorList>
            <person name="Wei H."/>
            <person name="Zhang X."/>
            <person name="Wang C."/>
            <person name="Wang J."/>
            <person name="Li T."/>
            <person name="Chen S."/>
            <person name="Li H."/>
            <person name="Wang B."/>
        </authorList>
    </citation>
    <scope>MUTAGENESIS OF ARG-428</scope>
</reference>
<reference key="12">
    <citation type="journal article" date="2023" name="Mol. Cell. Proteomics">
        <title>STK33 phosphorylates fibrous sheath protein AKAP3/4 to regulate sperm flagella assembly in spermiogenesis.</title>
        <authorList>
            <person name="Yu W."/>
            <person name="Li Y."/>
            <person name="Chen H."/>
            <person name="Cui Y."/>
            <person name="Situ C."/>
            <person name="Yao L."/>
            <person name="Zhang X."/>
            <person name="Lu S."/>
            <person name="Liu L."/>
            <person name="Li L."/>
            <person name="Ren J."/>
            <person name="Guo Y."/>
            <person name="Huo Z."/>
            <person name="Chen Y."/>
            <person name="Li H."/>
            <person name="Jiang T."/>
            <person name="Gu Y."/>
            <person name="Wang C."/>
            <person name="Zhu T."/>
            <person name="Li Y."/>
            <person name="Hu Z."/>
            <person name="Guo X."/>
        </authorList>
    </citation>
    <scope>PHOSPHORYLATION AT SER-583</scope>
</reference>
<evidence type="ECO:0000250" key="1">
    <source>
        <dbReference type="UniProtKB" id="O35774"/>
    </source>
</evidence>
<evidence type="ECO:0000250" key="2">
    <source>
        <dbReference type="UniProtKB" id="Q5JQC9"/>
    </source>
</evidence>
<evidence type="ECO:0000255" key="3"/>
<evidence type="ECO:0000256" key="4">
    <source>
        <dbReference type="SAM" id="MobiDB-lite"/>
    </source>
</evidence>
<evidence type="ECO:0000269" key="5">
    <source>
    </source>
</evidence>
<evidence type="ECO:0000269" key="6">
    <source>
    </source>
</evidence>
<evidence type="ECO:0000269" key="7">
    <source>
    </source>
</evidence>
<evidence type="ECO:0000269" key="8">
    <source>
    </source>
</evidence>
<evidence type="ECO:0000269" key="9">
    <source>
    </source>
</evidence>
<evidence type="ECO:0000269" key="10">
    <source>
    </source>
</evidence>
<evidence type="ECO:0000269" key="11">
    <source>
    </source>
</evidence>
<evidence type="ECO:0000269" key="12">
    <source>
    </source>
</evidence>
<evidence type="ECO:0000269" key="13">
    <source>
    </source>
</evidence>
<evidence type="ECO:0000303" key="14">
    <source>
    </source>
</evidence>
<evidence type="ECO:0000303" key="15">
    <source>
    </source>
</evidence>
<evidence type="ECO:0000303" key="16">
    <source>
    </source>
</evidence>
<evidence type="ECO:0000305" key="17"/>
<evidence type="ECO:0000312" key="18">
    <source>
        <dbReference type="MGI" id="MGI:102794"/>
    </source>
</evidence>
<keyword id="KW-0025">Alternative splicing</keyword>
<keyword id="KW-0966">Cell projection</keyword>
<keyword id="KW-0969">Cilium</keyword>
<keyword id="KW-0970">Cilium biogenesis/degradation</keyword>
<keyword id="KW-0903">Direct protein sequencing</keyword>
<keyword id="KW-0282">Flagellum</keyword>
<keyword id="KW-0597">Phosphoprotein</keyword>
<keyword id="KW-1185">Reference proteome</keyword>
<organism>
    <name type="scientific">Mus musculus</name>
    <name type="common">Mouse</name>
    <dbReference type="NCBI Taxonomy" id="10090"/>
    <lineage>
        <taxon>Eukaryota</taxon>
        <taxon>Metazoa</taxon>
        <taxon>Chordata</taxon>
        <taxon>Craniata</taxon>
        <taxon>Vertebrata</taxon>
        <taxon>Euteleostomi</taxon>
        <taxon>Mammalia</taxon>
        <taxon>Eutheria</taxon>
        <taxon>Euarchontoglires</taxon>
        <taxon>Glires</taxon>
        <taxon>Rodentia</taxon>
        <taxon>Myomorpha</taxon>
        <taxon>Muroidea</taxon>
        <taxon>Muridae</taxon>
        <taxon>Murinae</taxon>
        <taxon>Mus</taxon>
        <taxon>Mus</taxon>
    </lineage>
</organism>
<gene>
    <name evidence="14 18" type="primary">Akap4</name>
    <name type="synonym">Akap82</name>
    <name evidence="15" type="synonym">Fsc1</name>
</gene>
<sequence>MIAYCGTTTMSDDIDWLHSRRGVCKVDLYSPKGQQDQDRKVICFVDVSTLNVEDKDSKGAAGSRSEGELNLETLEEKEIIVIKDTEKQDQSKTEGSVCLFKQAPSDPISVLNWLLNDLQKYALGFQHALSPSASSCKHKVGDLEGDYSKIPSENCYSVYADQVNFDYLNKGPQNLRLEMAASKNTNNNQSPSNPATKSPSNQRSVATPEGECSMDDLSFYVNRLSSLVIQMARKEIKDKLEGGSKCLHHSMYTSGDKGKTSPRSAVSKIASEMAHEAVELTSSEMRGNGEDCRDGRKTFLYSEMCNKNKCGEKQQMCPKDSKEFADSISKGLMVYANQVASDMMVSVMKTLKVHSCGKPIPACVVLKRVLLKHTKEIVSDLIDSCMKNLHNITGVLMTDSDFVSAVKRNLFNHGKQNAADIMEAMLKRLVSALLGEKKETKSQSLAYATLKAGTNDPKCKNQSLEFSAMKAEMKGKDKCKSKADPCCKSLTSAERVSEHILKESLTMWNNQKQGNQGKVTNKVCCTSKDEKREKISPSTDSLAKDLIVSALMLIQYHLTQQAKGKDPCEEECPGSSMGYMSQSAQYEKCGGGQSSKSLSMKHFETRGAPGPSTCMKENQLESQKMDMSNMVLSLIQKLLSESPFSCDELTESDNKRCCDPRSSKAAPMAKRPEEQCQDNAELDFISGMKQMNRQFIDQLVESVMKLCLIMAKYSNNGAALAELEEQAALVGSGSRCGRDAMMSQNYSETPGPEVIVNNQCSTTNLQKQLQAVLQWIAASQFNVPMLYFMGDDDGQLEKLPEVSAKAAEKGYSVGDLLQEVMKFAKERQLDEAVGNMARKQLLDWLLANL</sequence>